<evidence type="ECO:0000255" key="1">
    <source>
        <dbReference type="HAMAP-Rule" id="MF_00549"/>
    </source>
</evidence>
<sequence length="151" mass="16941">MQKTTRTMPAHKHIALVAHDNYKPELLRWVKENKEKLQSHFLYATGTTGHMLSRETGLAIKSMISGPMGGDQQLGALISEGKIDMLIFFWDPLNAVPHDPDVKALLRIASVWNIPVATNRATAKFLFESPLLNEEVDVEIPDYQAYLAGRT</sequence>
<proteinExistence type="inferred from homology"/>
<comment type="function">
    <text evidence="1">Catalyzes the formation of methylglyoxal from dihydroxyacetone phosphate.</text>
</comment>
<comment type="catalytic activity">
    <reaction evidence="1">
        <text>dihydroxyacetone phosphate = methylglyoxal + phosphate</text>
        <dbReference type="Rhea" id="RHEA:17937"/>
        <dbReference type="ChEBI" id="CHEBI:17158"/>
        <dbReference type="ChEBI" id="CHEBI:43474"/>
        <dbReference type="ChEBI" id="CHEBI:57642"/>
        <dbReference type="EC" id="4.2.3.3"/>
    </reaction>
</comment>
<comment type="similarity">
    <text evidence="1">Belongs to the methylglyoxal synthase family.</text>
</comment>
<gene>
    <name evidence="1" type="primary">mgsA</name>
    <name type="ordered locus">VVA0630</name>
</gene>
<protein>
    <recommendedName>
        <fullName evidence="1">Methylglyoxal synthase</fullName>
        <shortName evidence="1">MGS</shortName>
        <ecNumber evidence="1">4.2.3.3</ecNumber>
    </recommendedName>
</protein>
<reference key="1">
    <citation type="journal article" date="2003" name="Genome Res.">
        <title>Comparative genome analysis of Vibrio vulnificus, a marine pathogen.</title>
        <authorList>
            <person name="Chen C.-Y."/>
            <person name="Wu K.-M."/>
            <person name="Chang Y.-C."/>
            <person name="Chang C.-H."/>
            <person name="Tsai H.-C."/>
            <person name="Liao T.-L."/>
            <person name="Liu Y.-M."/>
            <person name="Chen H.-J."/>
            <person name="Shen A.B.-T."/>
            <person name="Li J.-C."/>
            <person name="Su T.-L."/>
            <person name="Shao C.-P."/>
            <person name="Lee C.-T."/>
            <person name="Hor L.-I."/>
            <person name="Tsai S.-F."/>
        </authorList>
    </citation>
    <scope>NUCLEOTIDE SEQUENCE [LARGE SCALE GENOMIC DNA]</scope>
    <source>
        <strain>YJ016</strain>
    </source>
</reference>
<keyword id="KW-0456">Lyase</keyword>
<dbReference type="EC" id="4.2.3.3" evidence="1"/>
<dbReference type="EMBL" id="BA000038">
    <property type="protein sequence ID" value="BAC96656.1"/>
    <property type="molecule type" value="Genomic_DNA"/>
</dbReference>
<dbReference type="RefSeq" id="WP_011081106.1">
    <property type="nucleotide sequence ID" value="NC_005140.1"/>
</dbReference>
<dbReference type="SMR" id="Q7MEP0"/>
<dbReference type="STRING" id="672.VV93_v1c36310"/>
<dbReference type="KEGG" id="vvy:VVA0630"/>
<dbReference type="eggNOG" id="COG1803">
    <property type="taxonomic scope" value="Bacteria"/>
</dbReference>
<dbReference type="HOGENOM" id="CLU_120420_0_1_6"/>
<dbReference type="Proteomes" id="UP000002675">
    <property type="component" value="Chromosome II"/>
</dbReference>
<dbReference type="GO" id="GO:0005829">
    <property type="term" value="C:cytosol"/>
    <property type="evidence" value="ECO:0007669"/>
    <property type="project" value="TreeGrafter"/>
</dbReference>
<dbReference type="GO" id="GO:0008929">
    <property type="term" value="F:methylglyoxal synthase activity"/>
    <property type="evidence" value="ECO:0007669"/>
    <property type="project" value="UniProtKB-UniRule"/>
</dbReference>
<dbReference type="GO" id="GO:0019242">
    <property type="term" value="P:methylglyoxal biosynthetic process"/>
    <property type="evidence" value="ECO:0007669"/>
    <property type="project" value="UniProtKB-UniRule"/>
</dbReference>
<dbReference type="CDD" id="cd01422">
    <property type="entry name" value="MGS"/>
    <property type="match status" value="1"/>
</dbReference>
<dbReference type="FunFam" id="3.40.50.1380:FF:000002">
    <property type="entry name" value="Methylglyoxal synthase"/>
    <property type="match status" value="1"/>
</dbReference>
<dbReference type="Gene3D" id="3.40.50.1380">
    <property type="entry name" value="Methylglyoxal synthase-like domain"/>
    <property type="match status" value="1"/>
</dbReference>
<dbReference type="HAMAP" id="MF_00549">
    <property type="entry name" value="Methylglyoxal_synth"/>
    <property type="match status" value="1"/>
</dbReference>
<dbReference type="InterPro" id="IPR004363">
    <property type="entry name" value="Methylgl_synth"/>
</dbReference>
<dbReference type="InterPro" id="IPR018148">
    <property type="entry name" value="Methylglyoxal_synth_AS"/>
</dbReference>
<dbReference type="InterPro" id="IPR011607">
    <property type="entry name" value="MGS-like_dom"/>
</dbReference>
<dbReference type="InterPro" id="IPR036914">
    <property type="entry name" value="MGS-like_dom_sf"/>
</dbReference>
<dbReference type="NCBIfam" id="TIGR00160">
    <property type="entry name" value="MGSA"/>
    <property type="match status" value="1"/>
</dbReference>
<dbReference type="NCBIfam" id="NF003559">
    <property type="entry name" value="PRK05234.1"/>
    <property type="match status" value="1"/>
</dbReference>
<dbReference type="PANTHER" id="PTHR30492">
    <property type="entry name" value="METHYLGLYOXAL SYNTHASE"/>
    <property type="match status" value="1"/>
</dbReference>
<dbReference type="PANTHER" id="PTHR30492:SF0">
    <property type="entry name" value="METHYLGLYOXAL SYNTHASE"/>
    <property type="match status" value="1"/>
</dbReference>
<dbReference type="Pfam" id="PF02142">
    <property type="entry name" value="MGS"/>
    <property type="match status" value="1"/>
</dbReference>
<dbReference type="PIRSF" id="PIRSF006614">
    <property type="entry name" value="Methylglyox_syn"/>
    <property type="match status" value="1"/>
</dbReference>
<dbReference type="SMART" id="SM00851">
    <property type="entry name" value="MGS"/>
    <property type="match status" value="1"/>
</dbReference>
<dbReference type="SUPFAM" id="SSF52335">
    <property type="entry name" value="Methylglyoxal synthase-like"/>
    <property type="match status" value="1"/>
</dbReference>
<dbReference type="PROSITE" id="PS01335">
    <property type="entry name" value="METHYLGLYOXAL_SYNTH"/>
    <property type="match status" value="1"/>
</dbReference>
<dbReference type="PROSITE" id="PS51855">
    <property type="entry name" value="MGS"/>
    <property type="match status" value="1"/>
</dbReference>
<feature type="chain" id="PRO_0000178655" description="Methylglyoxal synthase">
    <location>
        <begin position="1"/>
        <end position="151"/>
    </location>
</feature>
<feature type="domain" description="MGS-like" evidence="1">
    <location>
        <begin position="6"/>
        <end position="151"/>
    </location>
</feature>
<feature type="active site" description="Proton donor/acceptor" evidence="1">
    <location>
        <position position="71"/>
    </location>
</feature>
<feature type="binding site" evidence="1">
    <location>
        <position position="19"/>
    </location>
    <ligand>
        <name>substrate</name>
    </ligand>
</feature>
<feature type="binding site" evidence="1">
    <location>
        <position position="23"/>
    </location>
    <ligand>
        <name>substrate</name>
    </ligand>
</feature>
<feature type="binding site" evidence="1">
    <location>
        <begin position="45"/>
        <end position="48"/>
    </location>
    <ligand>
        <name>substrate</name>
    </ligand>
</feature>
<feature type="binding site" evidence="1">
    <location>
        <begin position="65"/>
        <end position="66"/>
    </location>
    <ligand>
        <name>substrate</name>
    </ligand>
</feature>
<feature type="binding site" evidence="1">
    <location>
        <position position="98"/>
    </location>
    <ligand>
        <name>substrate</name>
    </ligand>
</feature>
<accession>Q7MEP0</accession>
<name>MGSA_VIBVY</name>
<organism>
    <name type="scientific">Vibrio vulnificus (strain YJ016)</name>
    <dbReference type="NCBI Taxonomy" id="196600"/>
    <lineage>
        <taxon>Bacteria</taxon>
        <taxon>Pseudomonadati</taxon>
        <taxon>Pseudomonadota</taxon>
        <taxon>Gammaproteobacteria</taxon>
        <taxon>Vibrionales</taxon>
        <taxon>Vibrionaceae</taxon>
        <taxon>Vibrio</taxon>
    </lineage>
</organism>